<dbReference type="EC" id="3.5.2.3" evidence="1"/>
<dbReference type="EMBL" id="CP000388">
    <property type="protein sequence ID" value="ABG39113.1"/>
    <property type="molecule type" value="Genomic_DNA"/>
</dbReference>
<dbReference type="RefSeq" id="WP_011573488.1">
    <property type="nucleotide sequence ID" value="NC_008228.1"/>
</dbReference>
<dbReference type="SMR" id="Q15YC5"/>
<dbReference type="STRING" id="342610.Patl_0584"/>
<dbReference type="KEGG" id="pat:Patl_0584"/>
<dbReference type="eggNOG" id="COG0418">
    <property type="taxonomic scope" value="Bacteria"/>
</dbReference>
<dbReference type="HOGENOM" id="CLU_041558_1_0_6"/>
<dbReference type="OrthoDB" id="9808095at2"/>
<dbReference type="UniPathway" id="UPA00070">
    <property type="reaction ID" value="UER00117"/>
</dbReference>
<dbReference type="Proteomes" id="UP000001981">
    <property type="component" value="Chromosome"/>
</dbReference>
<dbReference type="GO" id="GO:0005737">
    <property type="term" value="C:cytoplasm"/>
    <property type="evidence" value="ECO:0007669"/>
    <property type="project" value="TreeGrafter"/>
</dbReference>
<dbReference type="GO" id="GO:0004151">
    <property type="term" value="F:dihydroorotase activity"/>
    <property type="evidence" value="ECO:0007669"/>
    <property type="project" value="UniProtKB-UniRule"/>
</dbReference>
<dbReference type="GO" id="GO:0008270">
    <property type="term" value="F:zinc ion binding"/>
    <property type="evidence" value="ECO:0007669"/>
    <property type="project" value="UniProtKB-UniRule"/>
</dbReference>
<dbReference type="GO" id="GO:0006207">
    <property type="term" value="P:'de novo' pyrimidine nucleobase biosynthetic process"/>
    <property type="evidence" value="ECO:0007669"/>
    <property type="project" value="TreeGrafter"/>
</dbReference>
<dbReference type="GO" id="GO:0044205">
    <property type="term" value="P:'de novo' UMP biosynthetic process"/>
    <property type="evidence" value="ECO:0007669"/>
    <property type="project" value="UniProtKB-UniRule"/>
</dbReference>
<dbReference type="CDD" id="cd01294">
    <property type="entry name" value="DHOase"/>
    <property type="match status" value="1"/>
</dbReference>
<dbReference type="FunFam" id="3.20.20.140:FF:000006">
    <property type="entry name" value="Dihydroorotase"/>
    <property type="match status" value="1"/>
</dbReference>
<dbReference type="Gene3D" id="3.20.20.140">
    <property type="entry name" value="Metal-dependent hydrolases"/>
    <property type="match status" value="1"/>
</dbReference>
<dbReference type="HAMAP" id="MF_00219">
    <property type="entry name" value="PyrC_classII"/>
    <property type="match status" value="1"/>
</dbReference>
<dbReference type="InterPro" id="IPR006680">
    <property type="entry name" value="Amidohydro-rel"/>
</dbReference>
<dbReference type="InterPro" id="IPR004721">
    <property type="entry name" value="DHOdimr"/>
</dbReference>
<dbReference type="InterPro" id="IPR002195">
    <property type="entry name" value="Dihydroorotase_CS"/>
</dbReference>
<dbReference type="InterPro" id="IPR032466">
    <property type="entry name" value="Metal_Hydrolase"/>
</dbReference>
<dbReference type="NCBIfam" id="TIGR00856">
    <property type="entry name" value="pyrC_dimer"/>
    <property type="match status" value="1"/>
</dbReference>
<dbReference type="PANTHER" id="PTHR43137">
    <property type="entry name" value="DIHYDROOROTASE"/>
    <property type="match status" value="1"/>
</dbReference>
<dbReference type="PANTHER" id="PTHR43137:SF1">
    <property type="entry name" value="DIHYDROOROTASE"/>
    <property type="match status" value="1"/>
</dbReference>
<dbReference type="Pfam" id="PF01979">
    <property type="entry name" value="Amidohydro_1"/>
    <property type="match status" value="1"/>
</dbReference>
<dbReference type="PIRSF" id="PIRSF001237">
    <property type="entry name" value="DHOdimr"/>
    <property type="match status" value="1"/>
</dbReference>
<dbReference type="SUPFAM" id="SSF51556">
    <property type="entry name" value="Metallo-dependent hydrolases"/>
    <property type="match status" value="1"/>
</dbReference>
<dbReference type="PROSITE" id="PS00482">
    <property type="entry name" value="DIHYDROOROTASE_1"/>
    <property type="match status" value="1"/>
</dbReference>
<dbReference type="PROSITE" id="PS00483">
    <property type="entry name" value="DIHYDROOROTASE_2"/>
    <property type="match status" value="1"/>
</dbReference>
<evidence type="ECO:0000255" key="1">
    <source>
        <dbReference type="HAMAP-Rule" id="MF_00219"/>
    </source>
</evidence>
<comment type="function">
    <text evidence="1">Catalyzes the reversible cyclization of carbamoyl aspartate to dihydroorotate.</text>
</comment>
<comment type="catalytic activity">
    <reaction evidence="1">
        <text>(S)-dihydroorotate + H2O = N-carbamoyl-L-aspartate + H(+)</text>
        <dbReference type="Rhea" id="RHEA:24296"/>
        <dbReference type="ChEBI" id="CHEBI:15377"/>
        <dbReference type="ChEBI" id="CHEBI:15378"/>
        <dbReference type="ChEBI" id="CHEBI:30864"/>
        <dbReference type="ChEBI" id="CHEBI:32814"/>
        <dbReference type="EC" id="3.5.2.3"/>
    </reaction>
</comment>
<comment type="cofactor">
    <cofactor evidence="1">
        <name>Zn(2+)</name>
        <dbReference type="ChEBI" id="CHEBI:29105"/>
    </cofactor>
    <text evidence="1">Binds 2 Zn(2+) ions per subunit.</text>
</comment>
<comment type="pathway">
    <text evidence="1">Pyrimidine metabolism; UMP biosynthesis via de novo pathway; (S)-dihydroorotate from bicarbonate: step 3/3.</text>
</comment>
<comment type="subunit">
    <text evidence="1">Homodimer.</text>
</comment>
<comment type="similarity">
    <text evidence="1">Belongs to the metallo-dependent hydrolases superfamily. DHOase family. Class II DHOase subfamily.</text>
</comment>
<sequence length="344" mass="37816">MQQITLTQPDDWHLHFRDNDMLLETVPATARTFKRAIVMPNLVPPVVNAELASAYRDRILAARPQGSEFEPLMTLFLTNTTSIDDIRAAKKAGVVAAKLYPAGATTNSDAAVKGIEALFPVFAEMAEQGMLLLIHGEVTESHVDIFDREKLFIEQFLVKIVNQFPQLKVVLEHITTSDAVDFVSASSHNVAATITPQHLLLNRNDLLVGGVRPHNFCLPVLKRSTHQQALRKAVATGSSKFFLGTDSAPHEKSAKESACGCAGCYSAWSALELYAQVFEELDALDKLEGFASHHGADFYGLPRNTKQVTLVKEEWTIPEVITLPNGEPIVPFFAGQTVNWALKA</sequence>
<proteinExistence type="inferred from homology"/>
<name>PYRC_PSEA6</name>
<reference key="1">
    <citation type="submission" date="2006-06" db="EMBL/GenBank/DDBJ databases">
        <title>Complete sequence of Pseudoalteromonas atlantica T6c.</title>
        <authorList>
            <consortium name="US DOE Joint Genome Institute"/>
            <person name="Copeland A."/>
            <person name="Lucas S."/>
            <person name="Lapidus A."/>
            <person name="Barry K."/>
            <person name="Detter J.C."/>
            <person name="Glavina del Rio T."/>
            <person name="Hammon N."/>
            <person name="Israni S."/>
            <person name="Dalin E."/>
            <person name="Tice H."/>
            <person name="Pitluck S."/>
            <person name="Saunders E."/>
            <person name="Brettin T."/>
            <person name="Bruce D."/>
            <person name="Han C."/>
            <person name="Tapia R."/>
            <person name="Gilna P."/>
            <person name="Schmutz J."/>
            <person name="Larimer F."/>
            <person name="Land M."/>
            <person name="Hauser L."/>
            <person name="Kyrpides N."/>
            <person name="Kim E."/>
            <person name="Karls A.C."/>
            <person name="Bartlett D."/>
            <person name="Higgins B.P."/>
            <person name="Richardson P."/>
        </authorList>
    </citation>
    <scope>NUCLEOTIDE SEQUENCE [LARGE SCALE GENOMIC DNA]</scope>
    <source>
        <strain>T6c / ATCC BAA-1087</strain>
    </source>
</reference>
<keyword id="KW-0378">Hydrolase</keyword>
<keyword id="KW-0479">Metal-binding</keyword>
<keyword id="KW-0665">Pyrimidine biosynthesis</keyword>
<keyword id="KW-0862">Zinc</keyword>
<gene>
    <name evidence="1" type="primary">pyrC</name>
    <name type="ordered locus">Patl_0584</name>
</gene>
<accession>Q15YC5</accession>
<protein>
    <recommendedName>
        <fullName evidence="1">Dihydroorotase</fullName>
        <shortName evidence="1">DHOase</shortName>
        <ecNumber evidence="1">3.5.2.3</ecNumber>
    </recommendedName>
</protein>
<feature type="chain" id="PRO_1000024031" description="Dihydroorotase">
    <location>
        <begin position="1"/>
        <end position="344"/>
    </location>
</feature>
<feature type="active site" evidence="1">
    <location>
        <position position="246"/>
    </location>
</feature>
<feature type="binding site" evidence="1">
    <location>
        <position position="13"/>
    </location>
    <ligand>
        <name>Zn(2+)</name>
        <dbReference type="ChEBI" id="CHEBI:29105"/>
        <label>1</label>
    </ligand>
</feature>
<feature type="binding site" evidence="1">
    <location>
        <begin position="15"/>
        <end position="17"/>
    </location>
    <ligand>
        <name>substrate</name>
    </ligand>
</feature>
<feature type="binding site" evidence="1">
    <location>
        <position position="15"/>
    </location>
    <ligand>
        <name>Zn(2+)</name>
        <dbReference type="ChEBI" id="CHEBI:29105"/>
        <label>1</label>
    </ligand>
</feature>
<feature type="binding site" evidence="1">
    <location>
        <position position="41"/>
    </location>
    <ligand>
        <name>substrate</name>
    </ligand>
</feature>
<feature type="binding site" description="via carbamate group" evidence="1">
    <location>
        <position position="98"/>
    </location>
    <ligand>
        <name>Zn(2+)</name>
        <dbReference type="ChEBI" id="CHEBI:29105"/>
        <label>1</label>
    </ligand>
</feature>
<feature type="binding site" description="via carbamate group" evidence="1">
    <location>
        <position position="98"/>
    </location>
    <ligand>
        <name>Zn(2+)</name>
        <dbReference type="ChEBI" id="CHEBI:29105"/>
        <label>2</label>
    </ligand>
</feature>
<feature type="binding site" evidence="1">
    <location>
        <position position="135"/>
    </location>
    <ligand>
        <name>substrate</name>
    </ligand>
</feature>
<feature type="binding site" evidence="1">
    <location>
        <position position="135"/>
    </location>
    <ligand>
        <name>Zn(2+)</name>
        <dbReference type="ChEBI" id="CHEBI:29105"/>
        <label>2</label>
    </ligand>
</feature>
<feature type="binding site" evidence="1">
    <location>
        <position position="173"/>
    </location>
    <ligand>
        <name>Zn(2+)</name>
        <dbReference type="ChEBI" id="CHEBI:29105"/>
        <label>2</label>
    </ligand>
</feature>
<feature type="binding site" evidence="1">
    <location>
        <position position="218"/>
    </location>
    <ligand>
        <name>substrate</name>
    </ligand>
</feature>
<feature type="binding site" evidence="1">
    <location>
        <position position="246"/>
    </location>
    <ligand>
        <name>Zn(2+)</name>
        <dbReference type="ChEBI" id="CHEBI:29105"/>
        <label>1</label>
    </ligand>
</feature>
<feature type="binding site" evidence="1">
    <location>
        <position position="250"/>
    </location>
    <ligand>
        <name>substrate</name>
    </ligand>
</feature>
<feature type="binding site" evidence="1">
    <location>
        <position position="262"/>
    </location>
    <ligand>
        <name>substrate</name>
    </ligand>
</feature>
<feature type="modified residue" description="N6-carboxylysine" evidence="1">
    <location>
        <position position="98"/>
    </location>
</feature>
<organism>
    <name type="scientific">Pseudoalteromonas atlantica (strain T6c / ATCC BAA-1087)</name>
    <dbReference type="NCBI Taxonomy" id="3042615"/>
    <lineage>
        <taxon>Bacteria</taxon>
        <taxon>Pseudomonadati</taxon>
        <taxon>Pseudomonadota</taxon>
        <taxon>Gammaproteobacteria</taxon>
        <taxon>Alteromonadales</taxon>
        <taxon>Alteromonadaceae</taxon>
        <taxon>Paraglaciecola</taxon>
    </lineage>
</organism>